<sequence>MSEGVAQLKHEGSRQQVVVAGAAAGLVSRFVIAPLDVIKIRLQLQIHSLSEPTSYRGLNGPVYKGTLGTLKQILRDEGVTGLWKGNIPAELLYLTYGSVQFSAYTNISQMLDTIPAPYTLPSSANSFISGAGAGAAATTVTYPLDLLRTRFAAQGKDRVYTSIVASLKSIAQHEGPTGFFRGLGAGVSQIVPYMGLFFASYESLKPVMADSPLPLPLGSSDAVAGVVASVVSKTAVYPLDTTRKRLQVQGPNRARYVHRNIPTYSGVLMTLQHIWKHEGRRGMYRGLTVSLLKAAPASAVTMWTYERAMGIMVAFEKDGME</sequence>
<comment type="function">
    <text evidence="1">Mitochondrial transporter that mediates uptake of thiamine pyrophosphate (ThPP) into mitochondria.</text>
</comment>
<comment type="subcellular location">
    <subcellularLocation>
        <location evidence="1">Mitochondrion inner membrane</location>
        <topology evidence="1">Multi-pass membrane protein</topology>
    </subcellularLocation>
</comment>
<comment type="similarity">
    <text evidence="3">Belongs to the mitochondrial carrier (TC 2.A.29) family.</text>
</comment>
<comment type="sequence caution" evidence="3">
    <conflict type="erroneous gene model prediction">
        <sequence resource="EMBL-CDS" id="EAT88353"/>
    </conflict>
</comment>
<reference key="1">
    <citation type="journal article" date="2007" name="Plant Cell">
        <title>Dothideomycete-plant interactions illuminated by genome sequencing and EST analysis of the wheat pathogen Stagonospora nodorum.</title>
        <authorList>
            <person name="Hane J.K."/>
            <person name="Lowe R.G.T."/>
            <person name="Solomon P.S."/>
            <person name="Tan K.-C."/>
            <person name="Schoch C.L."/>
            <person name="Spatafora J.W."/>
            <person name="Crous P.W."/>
            <person name="Kodira C.D."/>
            <person name="Birren B.W."/>
            <person name="Galagan J.E."/>
            <person name="Torriani S.F.F."/>
            <person name="McDonald B.A."/>
            <person name="Oliver R.P."/>
        </authorList>
    </citation>
    <scope>NUCLEOTIDE SEQUENCE [LARGE SCALE GENOMIC DNA]</scope>
    <source>
        <strain>SN15 / ATCC MYA-4574 / FGSC 10173</strain>
    </source>
</reference>
<proteinExistence type="inferred from homology"/>
<keyword id="KW-0472">Membrane</keyword>
<keyword id="KW-0496">Mitochondrion</keyword>
<keyword id="KW-0999">Mitochondrion inner membrane</keyword>
<keyword id="KW-0677">Repeat</keyword>
<keyword id="KW-0812">Transmembrane</keyword>
<keyword id="KW-1133">Transmembrane helix</keyword>
<keyword id="KW-0813">Transport</keyword>
<protein>
    <recommendedName>
        <fullName>Mitochondrial thiamine pyrophosphate carrier 1</fullName>
    </recommendedName>
</protein>
<organism>
    <name type="scientific">Phaeosphaeria nodorum (strain SN15 / ATCC MYA-4574 / FGSC 10173)</name>
    <name type="common">Glume blotch fungus</name>
    <name type="synonym">Parastagonospora nodorum</name>
    <dbReference type="NCBI Taxonomy" id="321614"/>
    <lineage>
        <taxon>Eukaryota</taxon>
        <taxon>Fungi</taxon>
        <taxon>Dikarya</taxon>
        <taxon>Ascomycota</taxon>
        <taxon>Pezizomycotina</taxon>
        <taxon>Dothideomycetes</taxon>
        <taxon>Pleosporomycetidae</taxon>
        <taxon>Pleosporales</taxon>
        <taxon>Pleosporineae</taxon>
        <taxon>Phaeosphaeriaceae</taxon>
        <taxon>Parastagonospora</taxon>
    </lineage>
</organism>
<dbReference type="EMBL" id="CH445330">
    <property type="protein sequence ID" value="EAT88353.2"/>
    <property type="status" value="ALT_SEQ"/>
    <property type="molecule type" value="Genomic_DNA"/>
</dbReference>
<dbReference type="RefSeq" id="XP_001795006.1">
    <property type="nucleotide sequence ID" value="XM_001794954.1"/>
</dbReference>
<dbReference type="SMR" id="Q0UUH1"/>
<dbReference type="FunCoup" id="Q0UUH1">
    <property type="interactions" value="25"/>
</dbReference>
<dbReference type="STRING" id="321614.Q0UUH1"/>
<dbReference type="GeneID" id="5971874"/>
<dbReference type="KEGG" id="pno:SNOG_04593"/>
<dbReference type="VEuPathDB" id="FungiDB:JI435_045930"/>
<dbReference type="eggNOG" id="KOG0752">
    <property type="taxonomic scope" value="Eukaryota"/>
</dbReference>
<dbReference type="InParanoid" id="Q0UUH1"/>
<dbReference type="OMA" id="MYVCYGA"/>
<dbReference type="OrthoDB" id="18574at2759"/>
<dbReference type="Proteomes" id="UP000001055">
    <property type="component" value="Unassembled WGS sequence"/>
</dbReference>
<dbReference type="GO" id="GO:0005743">
    <property type="term" value="C:mitochondrial inner membrane"/>
    <property type="evidence" value="ECO:0000318"/>
    <property type="project" value="GO_Central"/>
</dbReference>
<dbReference type="GO" id="GO:0015234">
    <property type="term" value="F:thiamine transmembrane transporter activity"/>
    <property type="evidence" value="ECO:0000318"/>
    <property type="project" value="GO_Central"/>
</dbReference>
<dbReference type="GO" id="GO:0030974">
    <property type="term" value="P:thiamine pyrophosphate transmembrane transport"/>
    <property type="evidence" value="ECO:0000318"/>
    <property type="project" value="GO_Central"/>
</dbReference>
<dbReference type="FunFam" id="1.50.40.10:FF:000011">
    <property type="entry name" value="Mitochondrial thiamine pyrophosphate carrier 1"/>
    <property type="match status" value="1"/>
</dbReference>
<dbReference type="Gene3D" id="1.50.40.10">
    <property type="entry name" value="Mitochondrial carrier domain"/>
    <property type="match status" value="1"/>
</dbReference>
<dbReference type="InterPro" id="IPR002067">
    <property type="entry name" value="Mit_carrier"/>
</dbReference>
<dbReference type="InterPro" id="IPR018108">
    <property type="entry name" value="Mitochondrial_sb/sol_carrier"/>
</dbReference>
<dbReference type="InterPro" id="IPR023395">
    <property type="entry name" value="Mt_carrier_dom_sf"/>
</dbReference>
<dbReference type="PANTHER" id="PTHR24089">
    <property type="entry name" value="SOLUTE CARRIER FAMILY 25"/>
    <property type="match status" value="1"/>
</dbReference>
<dbReference type="Pfam" id="PF00153">
    <property type="entry name" value="Mito_carr"/>
    <property type="match status" value="3"/>
</dbReference>
<dbReference type="PRINTS" id="PR00926">
    <property type="entry name" value="MITOCARRIER"/>
</dbReference>
<dbReference type="SUPFAM" id="SSF103506">
    <property type="entry name" value="Mitochondrial carrier"/>
    <property type="match status" value="1"/>
</dbReference>
<dbReference type="PROSITE" id="PS50920">
    <property type="entry name" value="SOLCAR"/>
    <property type="match status" value="3"/>
</dbReference>
<feature type="chain" id="PRO_0000320471" description="Mitochondrial thiamine pyrophosphate carrier 1">
    <location>
        <begin position="1"/>
        <end position="321"/>
    </location>
</feature>
<feature type="transmembrane region" description="Helical; Name=1" evidence="2">
    <location>
        <begin position="17"/>
        <end position="38"/>
    </location>
</feature>
<feature type="transmembrane region" description="Helical; Name=2" evidence="2">
    <location>
        <begin position="91"/>
        <end position="107"/>
    </location>
</feature>
<feature type="transmembrane region" description="Helical; Name=3" evidence="2">
    <location>
        <begin position="127"/>
        <end position="147"/>
    </location>
</feature>
<feature type="transmembrane region" description="Helical; Name=4" evidence="2">
    <location>
        <begin position="182"/>
        <end position="199"/>
    </location>
</feature>
<feature type="transmembrane region" description="Helical; Name=5" evidence="2">
    <location>
        <begin position="213"/>
        <end position="231"/>
    </location>
</feature>
<feature type="transmembrane region" description="Helical; Name=6" evidence="2">
    <location>
        <begin position="286"/>
        <end position="303"/>
    </location>
</feature>
<feature type="repeat" description="Solcar 1">
    <location>
        <begin position="12"/>
        <end position="110"/>
    </location>
</feature>
<feature type="repeat" description="Solcar 2">
    <location>
        <begin position="121"/>
        <end position="207"/>
    </location>
</feature>
<feature type="repeat" description="Solcar 3">
    <location>
        <begin position="216"/>
        <end position="311"/>
    </location>
</feature>
<name>TPC1_PHANO</name>
<evidence type="ECO:0000250" key="1"/>
<evidence type="ECO:0000255" key="2"/>
<evidence type="ECO:0000305" key="3"/>
<accession>Q0UUH1</accession>
<gene>
    <name type="primary">TPC1</name>
    <name type="ORF">SNOG_04593</name>
</gene>